<organism>
    <name type="scientific">Edwardsiella ictaluri (strain 93-146)</name>
    <dbReference type="NCBI Taxonomy" id="634503"/>
    <lineage>
        <taxon>Bacteria</taxon>
        <taxon>Pseudomonadati</taxon>
        <taxon>Pseudomonadota</taxon>
        <taxon>Gammaproteobacteria</taxon>
        <taxon>Enterobacterales</taxon>
        <taxon>Hafniaceae</taxon>
        <taxon>Edwardsiella</taxon>
    </lineage>
</organism>
<sequence>MENEIITVACPTCGSAVIWGEQSPYRPFCSKRCQLIDLGEWANEEKRIASDATHSDSEEWSEVDDR</sequence>
<evidence type="ECO:0000255" key="1">
    <source>
        <dbReference type="HAMAP-Rule" id="MF_00649"/>
    </source>
</evidence>
<accession>C5B9G7</accession>
<protein>
    <recommendedName>
        <fullName evidence="1">DNA gyrase inhibitor YacG</fullName>
    </recommendedName>
</protein>
<keyword id="KW-0479">Metal-binding</keyword>
<keyword id="KW-0862">Zinc</keyword>
<feature type="chain" id="PRO_1000212398" description="DNA gyrase inhibitor YacG">
    <location>
        <begin position="1"/>
        <end position="66"/>
    </location>
</feature>
<feature type="binding site" evidence="1">
    <location>
        <position position="10"/>
    </location>
    <ligand>
        <name>Zn(2+)</name>
        <dbReference type="ChEBI" id="CHEBI:29105"/>
    </ligand>
</feature>
<feature type="binding site" evidence="1">
    <location>
        <position position="13"/>
    </location>
    <ligand>
        <name>Zn(2+)</name>
        <dbReference type="ChEBI" id="CHEBI:29105"/>
    </ligand>
</feature>
<feature type="binding site" evidence="1">
    <location>
        <position position="29"/>
    </location>
    <ligand>
        <name>Zn(2+)</name>
        <dbReference type="ChEBI" id="CHEBI:29105"/>
    </ligand>
</feature>
<feature type="binding site" evidence="1">
    <location>
        <position position="33"/>
    </location>
    <ligand>
        <name>Zn(2+)</name>
        <dbReference type="ChEBI" id="CHEBI:29105"/>
    </ligand>
</feature>
<proteinExistence type="inferred from homology"/>
<reference key="1">
    <citation type="submission" date="2009-03" db="EMBL/GenBank/DDBJ databases">
        <title>Complete genome sequence of Edwardsiella ictaluri 93-146.</title>
        <authorList>
            <person name="Williams M.L."/>
            <person name="Gillaspy A.F."/>
            <person name="Dyer D.W."/>
            <person name="Thune R.L."/>
            <person name="Waldbieser G.C."/>
            <person name="Schuster S.C."/>
            <person name="Gipson J."/>
            <person name="Zaitshik J."/>
            <person name="Landry C."/>
            <person name="Lawrence M.L."/>
        </authorList>
    </citation>
    <scope>NUCLEOTIDE SEQUENCE [LARGE SCALE GENOMIC DNA]</scope>
    <source>
        <strain>93-146</strain>
    </source>
</reference>
<comment type="function">
    <text evidence="1">Inhibits all the catalytic activities of DNA gyrase by preventing its interaction with DNA. Acts by binding directly to the C-terminal domain of GyrB, which probably disrupts DNA binding by the gyrase.</text>
</comment>
<comment type="cofactor">
    <cofactor evidence="1">
        <name>Zn(2+)</name>
        <dbReference type="ChEBI" id="CHEBI:29105"/>
    </cofactor>
    <text evidence="1">Binds 1 zinc ion.</text>
</comment>
<comment type="subunit">
    <text evidence="1">Interacts with GyrB.</text>
</comment>
<comment type="similarity">
    <text evidence="1">Belongs to the DNA gyrase inhibitor YacG family.</text>
</comment>
<gene>
    <name evidence="1" type="primary">yacG</name>
    <name type="ordered locus">NT01EI_0747</name>
</gene>
<name>YACG_EDWI9</name>
<dbReference type="EMBL" id="CP001600">
    <property type="protein sequence ID" value="ACR67968.1"/>
    <property type="molecule type" value="Genomic_DNA"/>
</dbReference>
<dbReference type="RefSeq" id="WP_015870161.1">
    <property type="nucleotide sequence ID" value="NZ_CP169062.1"/>
</dbReference>
<dbReference type="SMR" id="C5B9G7"/>
<dbReference type="STRING" id="67780.B6E78_14365"/>
<dbReference type="GeneID" id="69537808"/>
<dbReference type="KEGG" id="eic:NT01EI_0747"/>
<dbReference type="PATRIC" id="fig|634503.3.peg.675"/>
<dbReference type="HOGENOM" id="CLU_178280_3_1_6"/>
<dbReference type="OrthoDB" id="9809663at2"/>
<dbReference type="Proteomes" id="UP000001485">
    <property type="component" value="Chromosome"/>
</dbReference>
<dbReference type="GO" id="GO:0008657">
    <property type="term" value="F:DNA topoisomerase type II (double strand cut, ATP-hydrolyzing) inhibitor activity"/>
    <property type="evidence" value="ECO:0007669"/>
    <property type="project" value="UniProtKB-UniRule"/>
</dbReference>
<dbReference type="GO" id="GO:0008270">
    <property type="term" value="F:zinc ion binding"/>
    <property type="evidence" value="ECO:0007669"/>
    <property type="project" value="UniProtKB-UniRule"/>
</dbReference>
<dbReference type="GO" id="GO:0006355">
    <property type="term" value="P:regulation of DNA-templated transcription"/>
    <property type="evidence" value="ECO:0007669"/>
    <property type="project" value="InterPro"/>
</dbReference>
<dbReference type="Gene3D" id="3.30.50.10">
    <property type="entry name" value="Erythroid Transcription Factor GATA-1, subunit A"/>
    <property type="match status" value="1"/>
</dbReference>
<dbReference type="HAMAP" id="MF_00649">
    <property type="entry name" value="DNA_gyrase_inhibitor_YacG"/>
    <property type="match status" value="1"/>
</dbReference>
<dbReference type="InterPro" id="IPR005584">
    <property type="entry name" value="DNA_gyrase_inhibitor_YacG"/>
</dbReference>
<dbReference type="InterPro" id="IPR013088">
    <property type="entry name" value="Znf_NHR/GATA"/>
</dbReference>
<dbReference type="NCBIfam" id="NF001638">
    <property type="entry name" value="PRK00418.1"/>
    <property type="match status" value="1"/>
</dbReference>
<dbReference type="PANTHER" id="PTHR36150">
    <property type="entry name" value="DNA GYRASE INHIBITOR YACG"/>
    <property type="match status" value="1"/>
</dbReference>
<dbReference type="PANTHER" id="PTHR36150:SF1">
    <property type="entry name" value="DNA GYRASE INHIBITOR YACG"/>
    <property type="match status" value="1"/>
</dbReference>
<dbReference type="Pfam" id="PF03884">
    <property type="entry name" value="YacG"/>
    <property type="match status" value="1"/>
</dbReference>
<dbReference type="SUPFAM" id="SSF57716">
    <property type="entry name" value="Glucocorticoid receptor-like (DNA-binding domain)"/>
    <property type="match status" value="1"/>
</dbReference>